<name>IRS1B_XENLA</name>
<accession>P84770</accession>
<sequence length="1088" mass="119106">MASPTDPQAQENFSDVRKVGYLRKPKSMHKRFFVLRAASESSLARLEYYENEKKWRHKSGAPKRSIPLESCFNINKRADSKNKHLVALYTKDECFAIAAECEQEQEGWYQALVDLHNRGKTHHQHHNHDGAVNGVHDGLNGDEVYGEVTPPGLAFKEVWQVIMKPKGLGQLKNLVGIYRLCLTNRTISLVKLNSDAAAVVLQLMNIRRCGHSENFFFIEVGRSAVTGAGEFWMQVDDSVVAQNMHETILEAMKALSDEFRPRSKSQSSSNCSNPISVPLRRHHLNHPPPSQVGLNRRARTESATATSPAGGAAKHGSSSFRVRASSDGEGTMSRPASMEGSPVSPSASRTQSHRHRGSSRLHPPLNHSRSIPMPATRCSPSATSPVSLSSSSTSGHGSTSDCMCPRRSSASISGSPSDGGFISSDEYGSSPCDFRSSFRSVTPDSMGHTPPAREEELNNYICMGKSSSHLQRGPQQRYQPSRGEELTDFDKVFRKRTHSSGTSPPTVSHQKTPSQSSIEEYTEMMPTHPVRLTSFRHSAFVPTYSYPEECLDLHLEGSRANHKDDGYMPMSPGVAPVSTKTNDYMPMSPKSVSAPQQIINPRWHSAVDSNGYMMMSPSGSCSPDNTNYSKIWTNGTNPKLSIDSIEGKLPCSDYINMSPASGSTTSTPPDSYLNSVEESTKPVYSYFSLPRSFKHVHRKSEDGNLRISANSGHNLYTEDSSSSSTSSDSLGGQDPQQPRKGEGCIQGKRLTRPTRLSLENSSKASTLPRVREPALPPEPKSPGEYVNIEFNDKVFSGGLVPSMCSLPFVQSRVVPQRENLSEYMNMDLGVWRAKTSYASTSSYEPPNKPVNSVCPTETCSSSRPPIRGKPISRDYMSMQLGSLCPDYSQVPPTRLSAKSITLSSSKSNYAEMSSGRVSDNIPAIAPASNSSLSEASRSSLLGQGSGPSAFTRVSLSPNRNPSAKVIRAGDPQGRRRHSSETFSSTPTTARVTTGPVSGEDVKRHSSASFENVWLRPGEIARRDSLQPSDHTHNGLNYIDLDLAKDLSSLDHCNSHQSGVSHPSDDLSPYASITFHKLEEHRSQAETEE</sequence>
<gene>
    <name type="primary">irs1-b</name>
</gene>
<keyword id="KW-0597">Phosphoprotein</keyword>
<keyword id="KW-1185">Reference proteome</keyword>
<keyword id="KW-0677">Repeat</keyword>
<keyword id="KW-0807">Transducer</keyword>
<protein>
    <recommendedName>
        <fullName>Insulin receptor substrate 1-B</fullName>
        <shortName>IRS1-B</shortName>
        <shortName>xIRS-1-B</shortName>
    </recommendedName>
    <alternativeName>
        <fullName>XIRS-L'</fullName>
    </alternativeName>
</protein>
<proteinExistence type="evidence at transcript level"/>
<organism>
    <name type="scientific">Xenopus laevis</name>
    <name type="common">African clawed frog</name>
    <dbReference type="NCBI Taxonomy" id="8355"/>
    <lineage>
        <taxon>Eukaryota</taxon>
        <taxon>Metazoa</taxon>
        <taxon>Chordata</taxon>
        <taxon>Craniata</taxon>
        <taxon>Vertebrata</taxon>
        <taxon>Euteleostomi</taxon>
        <taxon>Amphibia</taxon>
        <taxon>Batrachia</taxon>
        <taxon>Anura</taxon>
        <taxon>Pipoidea</taxon>
        <taxon>Pipidae</taxon>
        <taxon>Xenopodinae</taxon>
        <taxon>Xenopus</taxon>
        <taxon>Xenopus</taxon>
    </lineage>
</organism>
<evidence type="ECO:0000250" key="1"/>
<evidence type="ECO:0000250" key="2">
    <source>
        <dbReference type="UniProtKB" id="P35568"/>
    </source>
</evidence>
<evidence type="ECO:0000250" key="3">
    <source>
        <dbReference type="UniProtKB" id="P35570"/>
    </source>
</evidence>
<evidence type="ECO:0000250" key="4">
    <source>
        <dbReference type="UniProtKB" id="Q91615"/>
    </source>
</evidence>
<evidence type="ECO:0000255" key="5"/>
<evidence type="ECO:0000255" key="6">
    <source>
        <dbReference type="PROSITE-ProRule" id="PRU00145"/>
    </source>
</evidence>
<evidence type="ECO:0000255" key="7">
    <source>
        <dbReference type="PROSITE-ProRule" id="PRU00389"/>
    </source>
</evidence>
<evidence type="ECO:0000256" key="8">
    <source>
        <dbReference type="SAM" id="MobiDB-lite"/>
    </source>
</evidence>
<evidence type="ECO:0000269" key="9">
    <source>
    </source>
</evidence>
<evidence type="ECO:0000305" key="10"/>
<feature type="chain" id="PRO_0000223525" description="Insulin receptor substrate 1-B" evidence="10">
    <location>
        <begin position="1"/>
        <end position="1088"/>
    </location>
</feature>
<feature type="domain" description="PH" evidence="6">
    <location>
        <begin position="15"/>
        <end position="117"/>
    </location>
</feature>
<feature type="domain" description="IRS-type PTB" evidence="7">
    <location>
        <begin position="155"/>
        <end position="259"/>
    </location>
</feature>
<feature type="region of interest" description="Disordered" evidence="8">
    <location>
        <begin position="259"/>
        <end position="428"/>
    </location>
</feature>
<feature type="region of interest" description="Disordered" evidence="8">
    <location>
        <begin position="466"/>
        <end position="485"/>
    </location>
</feature>
<feature type="region of interest" description="Disordered" evidence="8">
    <location>
        <begin position="496"/>
        <end position="516"/>
    </location>
</feature>
<feature type="region of interest" description="Disordered" evidence="8">
    <location>
        <begin position="704"/>
        <end position="785"/>
    </location>
</feature>
<feature type="region of interest" description="GRB2-binding" evidence="3">
    <location>
        <begin position="785"/>
        <end position="787"/>
    </location>
</feature>
<feature type="region of interest" description="Disordered" evidence="8">
    <location>
        <begin position="840"/>
        <end position="868"/>
    </location>
</feature>
<feature type="region of interest" description="Disordered" evidence="8">
    <location>
        <begin position="935"/>
        <end position="1006"/>
    </location>
</feature>
<feature type="short sequence motif" description="YXXM motif 1" evidence="5">
    <location>
        <begin position="460"/>
        <end position="463"/>
    </location>
</feature>
<feature type="short sequence motif" description="YXXM motif 2" evidence="5">
    <location>
        <begin position="521"/>
        <end position="524"/>
    </location>
</feature>
<feature type="short sequence motif" description="YXXM motif 3" evidence="5">
    <location>
        <begin position="567"/>
        <end position="570"/>
    </location>
</feature>
<feature type="short sequence motif" description="YXXM motif 4" evidence="5">
    <location>
        <begin position="584"/>
        <end position="587"/>
    </location>
</feature>
<feature type="short sequence motif" description="YXXM motif 5" evidence="5">
    <location>
        <begin position="612"/>
        <end position="615"/>
    </location>
</feature>
<feature type="short sequence motif" description="YXXM motif 6" evidence="5">
    <location>
        <begin position="654"/>
        <end position="657"/>
    </location>
</feature>
<feature type="short sequence motif" description="YXXM motif 7" evidence="5">
    <location>
        <begin position="823"/>
        <end position="826"/>
    </location>
</feature>
<feature type="short sequence motif" description="YXXM motif 8" evidence="5">
    <location>
        <begin position="875"/>
        <end position="878"/>
    </location>
</feature>
<feature type="short sequence motif" description="YXXM motif 9" evidence="5">
    <location>
        <begin position="909"/>
        <end position="912"/>
    </location>
</feature>
<feature type="compositionally biased region" description="Low complexity" evidence="8">
    <location>
        <begin position="264"/>
        <end position="278"/>
    </location>
</feature>
<feature type="compositionally biased region" description="Low complexity" evidence="8">
    <location>
        <begin position="302"/>
        <end position="312"/>
    </location>
</feature>
<feature type="compositionally biased region" description="Low complexity" evidence="8">
    <location>
        <begin position="379"/>
        <end position="400"/>
    </location>
</feature>
<feature type="compositionally biased region" description="Low complexity" evidence="8">
    <location>
        <begin position="408"/>
        <end position="420"/>
    </location>
</feature>
<feature type="compositionally biased region" description="Polar residues" evidence="8">
    <location>
        <begin position="466"/>
        <end position="479"/>
    </location>
</feature>
<feature type="compositionally biased region" description="Polar residues" evidence="8">
    <location>
        <begin position="499"/>
        <end position="516"/>
    </location>
</feature>
<feature type="compositionally biased region" description="Polar residues" evidence="8">
    <location>
        <begin position="707"/>
        <end position="718"/>
    </location>
</feature>
<feature type="compositionally biased region" description="Low complexity" evidence="8">
    <location>
        <begin position="719"/>
        <end position="729"/>
    </location>
</feature>
<feature type="compositionally biased region" description="Polar residues" evidence="8">
    <location>
        <begin position="840"/>
        <end position="863"/>
    </location>
</feature>
<feature type="compositionally biased region" description="Polar residues" evidence="8">
    <location>
        <begin position="946"/>
        <end position="961"/>
    </location>
</feature>
<feature type="compositionally biased region" description="Polar residues" evidence="8">
    <location>
        <begin position="980"/>
        <end position="995"/>
    </location>
</feature>
<feature type="modified residue" description="Phosphotyrosine" evidence="2">
    <location>
        <position position="48"/>
    </location>
</feature>
<feature type="modified residue" description="Phosphoserine" evidence="3">
    <location>
        <position position="307"/>
    </location>
</feature>
<feature type="modified residue" description="Phosphotyrosine; by INSR" evidence="1">
    <location>
        <position position="460"/>
    </location>
</feature>
<feature type="modified residue" description="Phosphotyrosine; by INSR" evidence="1">
    <location>
        <position position="567"/>
    </location>
</feature>
<feature type="modified residue" description="Phosphotyrosine; by INSR" evidence="1">
    <location>
        <position position="584"/>
    </location>
</feature>
<feature type="modified residue" description="Phosphotyrosine" evidence="2">
    <location>
        <position position="612"/>
    </location>
</feature>
<feature type="modified residue" description="Phosphotyrosine; by INSR" evidence="1">
    <location>
        <position position="785"/>
    </location>
</feature>
<feature type="modified residue" description="Phosphotyrosine; by INSR" evidence="1">
    <location>
        <position position="823"/>
    </location>
</feature>
<feature type="modified residue" description="Phosphotyrosine; by INSR" evidence="1">
    <location>
        <position position="875"/>
    </location>
</feature>
<feature type="modified residue" description="Phosphotyrosine; by INSR" evidence="1">
    <location>
        <position position="1037"/>
    </location>
</feature>
<feature type="modified residue" description="Phosphotyrosine; by INSR" evidence="1">
    <location>
        <position position="1069"/>
    </location>
</feature>
<comment type="function">
    <text evidence="1">May mediate the control of various cellular processes by insulin. When phosphorylated by the insulin receptor binds specifically to various cellular proteins containing SH2 domains such as phosphatidylinositol 3-kinase p85 subunit or grb2. Activates phosphatidylinositol 3-kinase when bound to the regulatory p85 subunit (By similarity).</text>
</comment>
<comment type="subunit">
    <text evidence="2 4">Interacts with the NPXY motif of tyrosine-phosphorylated igf1r and insr via the PTB domain. Binds to phosphatidylinositol 3-kinase p85 subunit at a low level in vitro prior to phosphorylation. Binding is greatly enhanced following tyrosine phosphorylation by insr and probably occurs via the phosphorylated YXXM motifs (By similarity).</text>
</comment>
<comment type="PTM">
    <text evidence="1">Phosphorylation of Tyr-785 is required for grb2-binding.</text>
</comment>
<reference evidence="10" key="1">
    <citation type="journal article" date="1995" name="Mol. Cell. Biol.">
        <title>Molecular cloning of an amphibian insulin receptor substrate 1-like cDNA and involvement of phosphatidylinositol 3-kinase in insulin-induced Xenopus oocyte maturation.</title>
        <authorList>
            <person name="Liu X.J."/>
            <person name="Sorisky A."/>
            <person name="Zhu L."/>
            <person name="Pawson T."/>
        </authorList>
    </citation>
    <scope>NUCLEOTIDE SEQUENCE [MRNA]</scope>
    <source>
        <tissue evidence="9">Ovary</tissue>
    </source>
</reference>
<dbReference type="SMR" id="P84770"/>
<dbReference type="IntAct" id="P84770">
    <property type="interactions" value="1"/>
</dbReference>
<dbReference type="Proteomes" id="UP000186698">
    <property type="component" value="Unplaced"/>
</dbReference>
<dbReference type="GO" id="GO:0005737">
    <property type="term" value="C:cytoplasm"/>
    <property type="evidence" value="ECO:0000250"/>
    <property type="project" value="UniProtKB"/>
</dbReference>
<dbReference type="GO" id="GO:0005829">
    <property type="term" value="C:cytosol"/>
    <property type="evidence" value="ECO:0000318"/>
    <property type="project" value="GO_Central"/>
</dbReference>
<dbReference type="GO" id="GO:0043231">
    <property type="term" value="C:intracellular membrane-bounded organelle"/>
    <property type="evidence" value="ECO:0000250"/>
    <property type="project" value="UniProtKB"/>
</dbReference>
<dbReference type="GO" id="GO:0005634">
    <property type="term" value="C:nucleus"/>
    <property type="evidence" value="ECO:0000250"/>
    <property type="project" value="UniProtKB"/>
</dbReference>
<dbReference type="GO" id="GO:0005886">
    <property type="term" value="C:plasma membrane"/>
    <property type="evidence" value="ECO:0000318"/>
    <property type="project" value="GO_Central"/>
</dbReference>
<dbReference type="GO" id="GO:0005158">
    <property type="term" value="F:insulin receptor binding"/>
    <property type="evidence" value="ECO:0000250"/>
    <property type="project" value="UniProtKB"/>
</dbReference>
<dbReference type="GO" id="GO:0005159">
    <property type="term" value="F:insulin-like growth factor receptor binding"/>
    <property type="evidence" value="ECO:0000250"/>
    <property type="project" value="UniProtKB"/>
</dbReference>
<dbReference type="GO" id="GO:0043548">
    <property type="term" value="F:phosphatidylinositol 3-kinase binding"/>
    <property type="evidence" value="ECO:0000250"/>
    <property type="project" value="UniProtKB"/>
</dbReference>
<dbReference type="GO" id="GO:0042169">
    <property type="term" value="F:SH2 domain binding"/>
    <property type="evidence" value="ECO:0000250"/>
    <property type="project" value="UniProtKB"/>
</dbReference>
<dbReference type="GO" id="GO:0008286">
    <property type="term" value="P:insulin receptor signaling pathway"/>
    <property type="evidence" value="ECO:0000318"/>
    <property type="project" value="GO_Central"/>
</dbReference>
<dbReference type="GO" id="GO:0048009">
    <property type="term" value="P:insulin-like growth factor receptor signaling pathway"/>
    <property type="evidence" value="ECO:0000250"/>
    <property type="project" value="UniProtKB"/>
</dbReference>
<dbReference type="CDD" id="cd01257">
    <property type="entry name" value="PH_IRS"/>
    <property type="match status" value="1"/>
</dbReference>
<dbReference type="CDD" id="cd01204">
    <property type="entry name" value="PTB_IRS"/>
    <property type="match status" value="1"/>
</dbReference>
<dbReference type="FunFam" id="2.30.29.30:FF:000029">
    <property type="entry name" value="Insulin receptor substrate 1"/>
    <property type="match status" value="1"/>
</dbReference>
<dbReference type="FunFam" id="2.30.29.30:FF:000129">
    <property type="entry name" value="Insulin receptor substrate 1"/>
    <property type="match status" value="1"/>
</dbReference>
<dbReference type="Gene3D" id="2.30.29.30">
    <property type="entry name" value="Pleckstrin-homology domain (PH domain)/Phosphotyrosine-binding domain (PTB)"/>
    <property type="match status" value="2"/>
</dbReference>
<dbReference type="InterPro" id="IPR039011">
    <property type="entry name" value="IRS"/>
</dbReference>
<dbReference type="InterPro" id="IPR002404">
    <property type="entry name" value="IRS_PTB"/>
</dbReference>
<dbReference type="InterPro" id="IPR011993">
    <property type="entry name" value="PH-like_dom_sf"/>
</dbReference>
<dbReference type="InterPro" id="IPR001849">
    <property type="entry name" value="PH_domain"/>
</dbReference>
<dbReference type="PANTHER" id="PTHR10614">
    <property type="entry name" value="INSULIN RECEPTOR SUBSTRATE"/>
    <property type="match status" value="1"/>
</dbReference>
<dbReference type="PANTHER" id="PTHR10614:SF11">
    <property type="entry name" value="INSULIN RECEPTOR SUBSTRATE 1"/>
    <property type="match status" value="1"/>
</dbReference>
<dbReference type="Pfam" id="PF02174">
    <property type="entry name" value="IRS"/>
    <property type="match status" value="1"/>
</dbReference>
<dbReference type="Pfam" id="PF00169">
    <property type="entry name" value="PH"/>
    <property type="match status" value="1"/>
</dbReference>
<dbReference type="PRINTS" id="PR00628">
    <property type="entry name" value="INSULINRSI"/>
</dbReference>
<dbReference type="SMART" id="SM01244">
    <property type="entry name" value="IRS"/>
    <property type="match status" value="1"/>
</dbReference>
<dbReference type="SMART" id="SM00233">
    <property type="entry name" value="PH"/>
    <property type="match status" value="1"/>
</dbReference>
<dbReference type="SMART" id="SM00310">
    <property type="entry name" value="PTBI"/>
    <property type="match status" value="1"/>
</dbReference>
<dbReference type="SUPFAM" id="SSF50729">
    <property type="entry name" value="PH domain-like"/>
    <property type="match status" value="2"/>
</dbReference>
<dbReference type="PROSITE" id="PS51064">
    <property type="entry name" value="IRS_PTB"/>
    <property type="match status" value="1"/>
</dbReference>
<dbReference type="PROSITE" id="PS50003">
    <property type="entry name" value="PH_DOMAIN"/>
    <property type="match status" value="1"/>
</dbReference>